<name>PAP3_BRACM</name>
<evidence type="ECO:0000255" key="1"/>
<evidence type="ECO:0000256" key="2">
    <source>
        <dbReference type="SAM" id="MobiDB-lite"/>
    </source>
</evidence>
<evidence type="ECO:0000269" key="3">
    <source>
    </source>
</evidence>
<evidence type="ECO:0000305" key="4"/>
<dbReference type="EMBL" id="AF290568">
    <property type="protein sequence ID" value="AAK57566.1"/>
    <property type="molecule type" value="Genomic_DNA"/>
</dbReference>
<dbReference type="EMBL" id="AF290565">
    <property type="protein sequence ID" value="AAK57563.1"/>
    <property type="molecule type" value="mRNA"/>
</dbReference>
<dbReference type="SMR" id="Q94KU5"/>
<dbReference type="Proteomes" id="UP000011750">
    <property type="component" value="Unplaced"/>
</dbReference>
<dbReference type="GO" id="GO:0009507">
    <property type="term" value="C:chloroplast"/>
    <property type="evidence" value="ECO:0007669"/>
    <property type="project" value="UniProtKB-SubCell"/>
</dbReference>
<dbReference type="InterPro" id="IPR039633">
    <property type="entry name" value="PAP"/>
</dbReference>
<dbReference type="InterPro" id="IPR006843">
    <property type="entry name" value="PAP/fibrillin_dom"/>
</dbReference>
<dbReference type="PANTHER" id="PTHR31906">
    <property type="entry name" value="PLASTID-LIPID-ASSOCIATED PROTEIN 4, CHLOROPLASTIC-RELATED"/>
    <property type="match status" value="1"/>
</dbReference>
<dbReference type="Pfam" id="PF04755">
    <property type="entry name" value="PAP_fibrillin"/>
    <property type="match status" value="1"/>
</dbReference>
<organism>
    <name type="scientific">Brassica campestris</name>
    <name type="common">Field mustard</name>
    <dbReference type="NCBI Taxonomy" id="3711"/>
    <lineage>
        <taxon>Eukaryota</taxon>
        <taxon>Viridiplantae</taxon>
        <taxon>Streptophyta</taxon>
        <taxon>Embryophyta</taxon>
        <taxon>Tracheophyta</taxon>
        <taxon>Spermatophyta</taxon>
        <taxon>Magnoliopsida</taxon>
        <taxon>eudicotyledons</taxon>
        <taxon>Gunneridae</taxon>
        <taxon>Pentapetalae</taxon>
        <taxon>rosids</taxon>
        <taxon>malvids</taxon>
        <taxon>Brassicales</taxon>
        <taxon>Brassicaceae</taxon>
        <taxon>Brassiceae</taxon>
        <taxon>Brassica</taxon>
    </lineage>
</organism>
<reference key="1">
    <citation type="journal article" date="2001" name="Plant Physiol.">
        <title>Brassica rapa has three genes that encode proteins associated with different neutral lipids in plastids of specific tissues.</title>
        <authorList>
            <person name="Kim H.U."/>
            <person name="Wu S.S.H."/>
            <person name="Ratnayake C."/>
            <person name="Huang A.H.C."/>
        </authorList>
    </citation>
    <scope>NUCLEOTIDE SEQUENCE [GENOMIC DNA / MRNA]</scope>
    <scope>TISSUE SPECIFICITY</scope>
</reference>
<sequence>MATLFTVTTTSRPFPANPSKTFSPSISLKPNALSFSLTHHRPPRPLRFSKIRSSLPSESDSEPEGGYSITDEWGEQPAEPESPPDNAPSAVSDEWGEKSESVPEESVTRFAESDPPTNEDEWEEREADDGVDKTWELKRCLADTVYGTELGFRAGSEVRAEVLEIVNQLEALNPTQAPVENPELLDGNWVLLYTAFSELLPLLAAGSTPLLKVKSISQSIDTKSLSIDNSTTLSSPFADFSFSATASFEVRTPSRIEVSFKEGTLKPPEIKSSVDLPESVGVFGQEINLSFLKQSLNPLQDVAANISRAISGQPPLKLPFPGNRGSSWLLTTYLDKDLRISRGDGGLFVLAREGSSLLEL</sequence>
<keyword id="KW-0150">Chloroplast</keyword>
<keyword id="KW-0934">Plastid</keyword>
<keyword id="KW-1185">Reference proteome</keyword>
<keyword id="KW-0809">Transit peptide</keyword>
<accession>Q94KU5</accession>
<accession>Q94KU7</accession>
<gene>
    <name type="primary">PAP3</name>
</gene>
<protein>
    <recommendedName>
        <fullName>Plastid lipid-associated protein 3, chloroplastic</fullName>
    </recommendedName>
</protein>
<comment type="subcellular location">
    <subcellularLocation>
        <location>Plastid</location>
        <location>Chloroplast</location>
    </subcellularLocation>
</comment>
<comment type="tissue specificity">
    <text evidence="3">Ubiquitous expression among various organs, but only at a very low level.</text>
</comment>
<comment type="induction">
    <text>Down-regulated by drought and oxidative stresses. Up-regulated by wounding.</text>
</comment>
<comment type="similarity">
    <text evidence="4">Belongs to the PAP/fibrillin family.</text>
</comment>
<feature type="transit peptide" description="Chloroplast" evidence="1">
    <location>
        <begin position="1"/>
        <end position="52"/>
    </location>
</feature>
<feature type="chain" id="PRO_0000023207" description="Plastid lipid-associated protein 3, chloroplastic">
    <location>
        <begin position="53"/>
        <end position="360"/>
    </location>
</feature>
<feature type="region of interest" description="Disordered" evidence="2">
    <location>
        <begin position="1"/>
        <end position="130"/>
    </location>
</feature>
<feature type="compositionally biased region" description="Polar residues" evidence="2">
    <location>
        <begin position="1"/>
        <end position="37"/>
    </location>
</feature>
<feature type="compositionally biased region" description="Basic residues" evidence="2">
    <location>
        <begin position="38"/>
        <end position="50"/>
    </location>
</feature>
<feature type="compositionally biased region" description="Low complexity" evidence="2">
    <location>
        <begin position="53"/>
        <end position="68"/>
    </location>
</feature>
<feature type="compositionally biased region" description="Acidic residues" evidence="2">
    <location>
        <begin position="117"/>
        <end position="127"/>
    </location>
</feature>
<feature type="sequence conflict" description="In Ref. 1; AAK57563." evidence="4" ref="1">
    <original>I</original>
    <variation>V</variation>
    <location>
        <position position="69"/>
    </location>
</feature>
<proteinExistence type="evidence at transcript level"/>